<evidence type="ECO:0000255" key="1">
    <source>
        <dbReference type="HAMAP-Rule" id="MF_00382"/>
    </source>
</evidence>
<evidence type="ECO:0000305" key="2"/>
<organism>
    <name type="scientific">Finegoldia magna (strain ATCC 29328 / DSM 20472 / WAL 2508)</name>
    <name type="common">Peptostreptococcus magnus</name>
    <dbReference type="NCBI Taxonomy" id="334413"/>
    <lineage>
        <taxon>Bacteria</taxon>
        <taxon>Bacillati</taxon>
        <taxon>Bacillota</taxon>
        <taxon>Tissierellia</taxon>
        <taxon>Tissierellales</taxon>
        <taxon>Peptoniphilaceae</taxon>
        <taxon>Finegoldia</taxon>
    </lineage>
</organism>
<comment type="function">
    <text evidence="1">Binds directly to 23S ribosomal RNA and is necessary for the in vitro assembly process of the 50S ribosomal subunit. It is not involved in the protein synthesizing functions of that subunit.</text>
</comment>
<comment type="similarity">
    <text evidence="1">Belongs to the bacterial ribosomal protein bL20 family.</text>
</comment>
<dbReference type="EMBL" id="AP008971">
    <property type="protein sequence ID" value="BAG08115.1"/>
    <property type="molecule type" value="Genomic_DNA"/>
</dbReference>
<dbReference type="RefSeq" id="WP_002838114.1">
    <property type="nucleotide sequence ID" value="NC_010376.1"/>
</dbReference>
<dbReference type="SMR" id="B0S175"/>
<dbReference type="STRING" id="334413.FMG_0697"/>
<dbReference type="GeneID" id="60840098"/>
<dbReference type="KEGG" id="fma:FMG_0697"/>
<dbReference type="eggNOG" id="COG0292">
    <property type="taxonomic scope" value="Bacteria"/>
</dbReference>
<dbReference type="HOGENOM" id="CLU_123265_0_1_9"/>
<dbReference type="Proteomes" id="UP000001319">
    <property type="component" value="Chromosome"/>
</dbReference>
<dbReference type="GO" id="GO:1990904">
    <property type="term" value="C:ribonucleoprotein complex"/>
    <property type="evidence" value="ECO:0007669"/>
    <property type="project" value="UniProtKB-KW"/>
</dbReference>
<dbReference type="GO" id="GO:0005840">
    <property type="term" value="C:ribosome"/>
    <property type="evidence" value="ECO:0007669"/>
    <property type="project" value="UniProtKB-KW"/>
</dbReference>
<dbReference type="GO" id="GO:0019843">
    <property type="term" value="F:rRNA binding"/>
    <property type="evidence" value="ECO:0007669"/>
    <property type="project" value="UniProtKB-UniRule"/>
</dbReference>
<dbReference type="GO" id="GO:0003735">
    <property type="term" value="F:structural constituent of ribosome"/>
    <property type="evidence" value="ECO:0007669"/>
    <property type="project" value="InterPro"/>
</dbReference>
<dbReference type="GO" id="GO:0000027">
    <property type="term" value="P:ribosomal large subunit assembly"/>
    <property type="evidence" value="ECO:0007669"/>
    <property type="project" value="UniProtKB-UniRule"/>
</dbReference>
<dbReference type="GO" id="GO:0006412">
    <property type="term" value="P:translation"/>
    <property type="evidence" value="ECO:0007669"/>
    <property type="project" value="InterPro"/>
</dbReference>
<dbReference type="CDD" id="cd07026">
    <property type="entry name" value="Ribosomal_L20"/>
    <property type="match status" value="1"/>
</dbReference>
<dbReference type="FunFam" id="1.10.1900.20:FF:000001">
    <property type="entry name" value="50S ribosomal protein L20"/>
    <property type="match status" value="1"/>
</dbReference>
<dbReference type="Gene3D" id="6.10.160.10">
    <property type="match status" value="1"/>
</dbReference>
<dbReference type="Gene3D" id="1.10.1900.20">
    <property type="entry name" value="Ribosomal protein L20"/>
    <property type="match status" value="1"/>
</dbReference>
<dbReference type="HAMAP" id="MF_00382">
    <property type="entry name" value="Ribosomal_bL20"/>
    <property type="match status" value="1"/>
</dbReference>
<dbReference type="InterPro" id="IPR005813">
    <property type="entry name" value="Ribosomal_bL20"/>
</dbReference>
<dbReference type="InterPro" id="IPR049946">
    <property type="entry name" value="RIBOSOMAL_L20_CS"/>
</dbReference>
<dbReference type="InterPro" id="IPR035566">
    <property type="entry name" value="Ribosomal_protein_bL20_C"/>
</dbReference>
<dbReference type="NCBIfam" id="TIGR01032">
    <property type="entry name" value="rplT_bact"/>
    <property type="match status" value="1"/>
</dbReference>
<dbReference type="PANTHER" id="PTHR10986">
    <property type="entry name" value="39S RIBOSOMAL PROTEIN L20"/>
    <property type="match status" value="1"/>
</dbReference>
<dbReference type="Pfam" id="PF00453">
    <property type="entry name" value="Ribosomal_L20"/>
    <property type="match status" value="1"/>
</dbReference>
<dbReference type="PRINTS" id="PR00062">
    <property type="entry name" value="RIBOSOMALL20"/>
</dbReference>
<dbReference type="SUPFAM" id="SSF74731">
    <property type="entry name" value="Ribosomal protein L20"/>
    <property type="match status" value="1"/>
</dbReference>
<dbReference type="PROSITE" id="PS00937">
    <property type="entry name" value="RIBOSOMAL_L20"/>
    <property type="match status" value="1"/>
</dbReference>
<protein>
    <recommendedName>
        <fullName evidence="1">Large ribosomal subunit protein bL20</fullName>
    </recommendedName>
    <alternativeName>
        <fullName evidence="2">50S ribosomal protein L20</fullName>
    </alternativeName>
</protein>
<sequence length="117" mass="13652">MARIKRGTNNRKRHKKVLKQAKGYYGSKHTLFKTANQAVMKSLAYSYVGRKRRKRDFRKLWIARINAATRMHDLSYSKFMHGLKVAGVDLNRKVLADMAVRDEKEFAKLVELAKNNL</sequence>
<reference key="1">
    <citation type="journal article" date="2008" name="DNA Res.">
        <title>Complete genome sequence of Finegoldia magna, an anaerobic opportunistic pathogen.</title>
        <authorList>
            <person name="Goto T."/>
            <person name="Yamashita A."/>
            <person name="Hirakawa H."/>
            <person name="Matsutani M."/>
            <person name="Todo K."/>
            <person name="Ohshima K."/>
            <person name="Toh H."/>
            <person name="Miyamoto K."/>
            <person name="Kuhara S."/>
            <person name="Hattori M."/>
            <person name="Shimizu T."/>
            <person name="Akimoto S."/>
        </authorList>
    </citation>
    <scope>NUCLEOTIDE SEQUENCE [LARGE SCALE GENOMIC DNA]</scope>
    <source>
        <strain>ATCC 29328 / DSM 20472 / WAL 2508</strain>
    </source>
</reference>
<proteinExistence type="inferred from homology"/>
<keyword id="KW-1185">Reference proteome</keyword>
<keyword id="KW-0687">Ribonucleoprotein</keyword>
<keyword id="KW-0689">Ribosomal protein</keyword>
<keyword id="KW-0694">RNA-binding</keyword>
<keyword id="KW-0699">rRNA-binding</keyword>
<name>RL20_FINM2</name>
<feature type="chain" id="PRO_1000122318" description="Large ribosomal subunit protein bL20">
    <location>
        <begin position="1"/>
        <end position="117"/>
    </location>
</feature>
<gene>
    <name evidence="1" type="primary">rplT</name>
    <name type="ordered locus">FMG_0697</name>
</gene>
<accession>B0S175</accession>